<name>CXP2_PARCG</name>
<reference evidence="6" key="1">
    <citation type="journal article" date="2015" name="Toxicon">
        <title>Recombinant expression and predicted structure of parborlysin, a cytolytic protein from the Antarctic heteronemertine Parborlasia corrugatus.</title>
        <authorList>
            <person name="Butala M."/>
            <person name="Sega D."/>
            <person name="Tomc B."/>
            <person name="Podlesek Z."/>
            <person name="Kem W.R."/>
            <person name="Kupper F.C."/>
            <person name="Turk T."/>
        </authorList>
    </citation>
    <scope>NUCLEOTIDE SEQUENCE [MRNA]</scope>
</reference>
<comment type="function">
    <text evidence="1">Cytolysin that shows hemolytic activity (on bovine erythrocytes, HC(50)=5.75 mg/ml). This hemolytic activity is completely inhibited by small unilamelar vesicles composed of PC/PG, PC/PI and PC/PS in 1:1 molar ratios (with at least 100 mg/ml concentration).</text>
</comment>
<comment type="subcellular location">
    <subcellularLocation>
        <location evidence="5">Secreted</location>
    </subcellularLocation>
</comment>
<comment type="tissue specificity">
    <text evidence="5">Localized within the skin and proboscis and are most readily isolated from body mucus secretions.</text>
</comment>
<comment type="similarity">
    <text evidence="4">Belongs to the worm cytolysin family.</text>
</comment>
<protein>
    <recommendedName>
        <fullName evidence="3">Parbolysin P2</fullName>
    </recommendedName>
    <alternativeName>
        <fullName>Parbolysin 2</fullName>
    </alternativeName>
</protein>
<proteinExistence type="inferred from homology"/>
<feature type="chain" id="PRO_0000454511" description="Parbolysin P2" evidence="5">
    <location>
        <begin position="1"/>
        <end position="93"/>
    </location>
</feature>
<feature type="disulfide bond" evidence="2">
    <location>
        <begin position="16"/>
        <end position="37"/>
    </location>
</feature>
<feature type="disulfide bond" evidence="2">
    <location>
        <begin position="22"/>
        <end position="33"/>
    </location>
</feature>
<keyword id="KW-0204">Cytolysis</keyword>
<keyword id="KW-1015">Disulfide bond</keyword>
<keyword id="KW-0354">Hemolysis</keyword>
<keyword id="KW-0964">Secreted</keyword>
<keyword id="KW-0800">Toxin</keyword>
<sequence>GWPAYPGSNGIRSSVCQKKLGCGSKNLASLGVCKAFCLGRKRFWQKCGKNGSSGKGSRISNPVLAHAVEKASKGLIKVTDMAVAAIVKYAGKK</sequence>
<evidence type="ECO:0000250" key="1">
    <source>
        <dbReference type="UniProtKB" id="A0A0N7HUN6"/>
    </source>
</evidence>
<evidence type="ECO:0000250" key="2">
    <source>
        <dbReference type="UniProtKB" id="P01527"/>
    </source>
</evidence>
<evidence type="ECO:0000303" key="3">
    <source>
    </source>
</evidence>
<evidence type="ECO:0000305" key="4"/>
<evidence type="ECO:0000305" key="5">
    <source>
    </source>
</evidence>
<evidence type="ECO:0000312" key="6">
    <source>
        <dbReference type="EMBL" id="ALI86906.1"/>
    </source>
</evidence>
<accession>A0A0P0C6M6</accession>
<dbReference type="EMBL" id="KT693315">
    <property type="protein sequence ID" value="ALI86906.1"/>
    <property type="molecule type" value="mRNA"/>
</dbReference>
<dbReference type="GO" id="GO:0005576">
    <property type="term" value="C:extracellular region"/>
    <property type="evidence" value="ECO:0007669"/>
    <property type="project" value="UniProtKB-SubCell"/>
</dbReference>
<dbReference type="GO" id="GO:0090729">
    <property type="term" value="F:toxin activity"/>
    <property type="evidence" value="ECO:0007669"/>
    <property type="project" value="UniProtKB-KW"/>
</dbReference>
<dbReference type="GO" id="GO:0031640">
    <property type="term" value="P:killing of cells of another organism"/>
    <property type="evidence" value="ECO:0007669"/>
    <property type="project" value="UniProtKB-KW"/>
</dbReference>
<organism>
    <name type="scientific">Parborlasia corrugatus</name>
    <name type="common">Antarctic nemertean worm</name>
    <dbReference type="NCBI Taxonomy" id="187802"/>
    <lineage>
        <taxon>Eukaryota</taxon>
        <taxon>Metazoa</taxon>
        <taxon>Spiralia</taxon>
        <taxon>Lophotrochozoa</taxon>
        <taxon>Nemertea</taxon>
        <taxon>Pilidiophora</taxon>
        <taxon>Heteronemertea</taxon>
        <taxon>Lineidae</taxon>
        <taxon>Parborlasia</taxon>
    </lineage>
</organism>